<name>AMPN_BOVIN</name>
<sequence length="965" mass="109276">MAKGFYISKALGILAILLGVAAVATIIALSVVYAQEKNKNAERGTAAPTSPTGPTTTSATTLDQSKPWNRYRLPTTLLPDSYRVTLRPYLTPNNNGLYIFTGSSTVRFTCKEPTDVIIIHSKKLNYTQHSGHLAALKGVGDTQAPEIDRTELVLLTEYLVVHLKSSLEAGKTYEMETTFQGELADDLAGFYRSEYMDGNVKKVLATTQMQSTDARKSFPCFDEPAMKATFNITLIHPKDLTALSNMPPKGPSVPFDGDSNWSVTEFETTPVMSTYLLAYIVSEFTSVESVAPNDVQIRIWARPKATADNHGLYALNVTGPILNFFANHYNTAYPLPKSDQIALPDFNAGAMENWGLVTYRENALLYDPQSSSSSNKERVVTVIAHELAHQWFGNLVTLAWWNDLWLNEGFASYVEYLGADYAEPTWNLKDLMVPNDVYSVMAVDALVTSHPLTTPANEVNTPAQISEMFDTISYSKGASVIRMLSNFLTEDLFKKGLASYLQTFAYQNTTYLNLWEHLQMAVENQLSIRLPDTVSAIMDRWTLQMGFPVITVDTNTGTISQKHFLLDPNSTVTRPSQFNYLWIVPISSIRNGQPQEHYWLRGEERNQNELFKAAADDWVLLNINVTGYYQVNYDENNWKKIQNQLMSRRENIPVINRAQVIYDSFNLASAHMVPVTLALNNTLFLKNEMEYMPWQAAVSSLNYFKLMFDRTEVYGPMQNYLKNQVEPIFLYFENLTKNWTEIPENLMDQYSEINAISTACSNGLPKCEELAKTLFNQWMNNPNVNPIDPNLRSTIYCNAIAQGGQEEWDFAWNQLQQAELVNEADKLRSALACTNHVWLLNRYLSYTLNPDLIRKQDATSTITSIASNVIGQSLAWDFIRSNWKKLFEDYGGGSFSFSNLIQGVTRRFSTEFELQQLEEFKENNMDVGFGSGTRALEQALEKTKANINWVKENKEVVLNWFKDHS</sequence>
<gene>
    <name type="primary">ANPEP</name>
    <name type="synonym">APN</name>
</gene>
<reference key="1">
    <citation type="submission" date="2005-09" db="EMBL/GenBank/DDBJ databases">
        <authorList>
            <consortium name="NIH - Mammalian Gene Collection (MGC) project"/>
        </authorList>
    </citation>
    <scope>NUCLEOTIDE SEQUENCE [LARGE SCALE MRNA]</scope>
    <source>
        <strain>Crossbred X Angus</strain>
        <tissue>Ileum</tissue>
    </source>
</reference>
<reference key="2">
    <citation type="journal article" date="1997" name="J. Virol.">
        <title>Interspecies aminopeptidase-N chimeras reveal species-specific receptor recognition by canine coronavirus, feline infectious peritonitis virus, and transmissible gastroenteritis virus.</title>
        <authorList>
            <person name="Benbacer L."/>
            <person name="Kut E."/>
            <person name="Besnardeau L."/>
            <person name="Laude H."/>
            <person name="Delmas B."/>
        </authorList>
    </citation>
    <scope>NUCLEOTIDE SEQUENCE [MRNA] OF 648-838</scope>
    <source>
        <tissue>Intestine</tissue>
    </source>
</reference>
<protein>
    <recommendedName>
        <fullName evidence="7">Aminopeptidase N</fullName>
        <shortName>AP-N</shortName>
        <shortName>bAPN</shortName>
        <ecNumber evidence="1">3.4.11.2</ecNumber>
    </recommendedName>
    <alternativeName>
        <fullName>Alanyl aminopeptidase</fullName>
    </alternativeName>
    <alternativeName>
        <fullName>Aminopeptidase M</fullName>
        <shortName>AP-M</shortName>
    </alternativeName>
    <alternativeName>
        <fullName>Microsomal aminopeptidase</fullName>
    </alternativeName>
    <cdAntigenName>CD13</cdAntigenName>
</protein>
<proteinExistence type="evidence at transcript level"/>
<organism>
    <name type="scientific">Bos taurus</name>
    <name type="common">Bovine</name>
    <dbReference type="NCBI Taxonomy" id="9913"/>
    <lineage>
        <taxon>Eukaryota</taxon>
        <taxon>Metazoa</taxon>
        <taxon>Chordata</taxon>
        <taxon>Craniata</taxon>
        <taxon>Vertebrata</taxon>
        <taxon>Euteleostomi</taxon>
        <taxon>Mammalia</taxon>
        <taxon>Eutheria</taxon>
        <taxon>Laurasiatheria</taxon>
        <taxon>Artiodactyla</taxon>
        <taxon>Ruminantia</taxon>
        <taxon>Pecora</taxon>
        <taxon>Bovidae</taxon>
        <taxon>Bovinae</taxon>
        <taxon>Bos</taxon>
    </lineage>
</organism>
<dbReference type="EC" id="3.4.11.2" evidence="1"/>
<dbReference type="EMBL" id="BC105142">
    <property type="protein sequence ID" value="AAI05143.1"/>
    <property type="molecule type" value="mRNA"/>
</dbReference>
<dbReference type="EMBL" id="X98240">
    <property type="protein sequence ID" value="CAA66896.1"/>
    <property type="molecule type" value="mRNA"/>
</dbReference>
<dbReference type="RefSeq" id="NP_001068612.1">
    <property type="nucleotide sequence ID" value="NM_001075144.1"/>
</dbReference>
<dbReference type="SMR" id="P79098"/>
<dbReference type="FunCoup" id="P79098">
    <property type="interactions" value="642"/>
</dbReference>
<dbReference type="STRING" id="9913.ENSBTAP00000071231"/>
<dbReference type="ChEMBL" id="CHEMBL2010632"/>
<dbReference type="MEROPS" id="M01.001"/>
<dbReference type="GlyCosmos" id="P79098">
    <property type="glycosylation" value="10 sites, No reported glycans"/>
</dbReference>
<dbReference type="GlyGen" id="P79098">
    <property type="glycosylation" value="10 sites"/>
</dbReference>
<dbReference type="PaxDb" id="9913-ENSBTAP00000022456"/>
<dbReference type="GeneID" id="404191"/>
<dbReference type="KEGG" id="bta:404191"/>
<dbReference type="CTD" id="290"/>
<dbReference type="eggNOG" id="KOG1046">
    <property type="taxonomic scope" value="Eukaryota"/>
</dbReference>
<dbReference type="InParanoid" id="P79098"/>
<dbReference type="OrthoDB" id="510539at2759"/>
<dbReference type="PRO" id="PR:P79098"/>
<dbReference type="Proteomes" id="UP000009136">
    <property type="component" value="Unplaced"/>
</dbReference>
<dbReference type="GO" id="GO:0005737">
    <property type="term" value="C:cytoplasm"/>
    <property type="evidence" value="ECO:0000318"/>
    <property type="project" value="GO_Central"/>
</dbReference>
<dbReference type="GO" id="GO:0005615">
    <property type="term" value="C:extracellular space"/>
    <property type="evidence" value="ECO:0000318"/>
    <property type="project" value="GO_Central"/>
</dbReference>
<dbReference type="GO" id="GO:0005886">
    <property type="term" value="C:plasma membrane"/>
    <property type="evidence" value="ECO:0000250"/>
    <property type="project" value="UniProtKB"/>
</dbReference>
<dbReference type="GO" id="GO:0016285">
    <property type="term" value="F:alanyl aminopeptidase activity"/>
    <property type="evidence" value="ECO:0007669"/>
    <property type="project" value="UniProtKB-EC"/>
</dbReference>
<dbReference type="GO" id="GO:0070006">
    <property type="term" value="F:metalloaminopeptidase activity"/>
    <property type="evidence" value="ECO:0000318"/>
    <property type="project" value="GO_Central"/>
</dbReference>
<dbReference type="GO" id="GO:0042277">
    <property type="term" value="F:peptide binding"/>
    <property type="evidence" value="ECO:0000318"/>
    <property type="project" value="GO_Central"/>
</dbReference>
<dbReference type="GO" id="GO:0001618">
    <property type="term" value="F:virus receptor activity"/>
    <property type="evidence" value="ECO:0007669"/>
    <property type="project" value="UniProtKB-KW"/>
</dbReference>
<dbReference type="GO" id="GO:0008270">
    <property type="term" value="F:zinc ion binding"/>
    <property type="evidence" value="ECO:0000318"/>
    <property type="project" value="GO_Central"/>
</dbReference>
<dbReference type="GO" id="GO:0001525">
    <property type="term" value="P:angiogenesis"/>
    <property type="evidence" value="ECO:0007669"/>
    <property type="project" value="UniProtKB-KW"/>
</dbReference>
<dbReference type="GO" id="GO:0030154">
    <property type="term" value="P:cell differentiation"/>
    <property type="evidence" value="ECO:0007669"/>
    <property type="project" value="UniProtKB-KW"/>
</dbReference>
<dbReference type="GO" id="GO:0043171">
    <property type="term" value="P:peptide catabolic process"/>
    <property type="evidence" value="ECO:0000318"/>
    <property type="project" value="GO_Central"/>
</dbReference>
<dbReference type="GO" id="GO:0006508">
    <property type="term" value="P:proteolysis"/>
    <property type="evidence" value="ECO:0000318"/>
    <property type="project" value="GO_Central"/>
</dbReference>
<dbReference type="CDD" id="cd09601">
    <property type="entry name" value="M1_APN-Q_like"/>
    <property type="match status" value="1"/>
</dbReference>
<dbReference type="FunFam" id="2.60.40.1910:FF:000005">
    <property type="entry name" value="Aminopeptidase"/>
    <property type="match status" value="1"/>
</dbReference>
<dbReference type="FunFam" id="1.25.50.20:FF:000012">
    <property type="entry name" value="Aminopeptidase N"/>
    <property type="match status" value="1"/>
</dbReference>
<dbReference type="FunFam" id="2.60.40.1730:FF:000012">
    <property type="entry name" value="Aminopeptidase N"/>
    <property type="match status" value="1"/>
</dbReference>
<dbReference type="FunFam" id="1.10.390.10:FF:000016">
    <property type="entry name" value="Glutamyl aminopeptidase"/>
    <property type="match status" value="1"/>
</dbReference>
<dbReference type="Gene3D" id="1.25.50.20">
    <property type="match status" value="1"/>
</dbReference>
<dbReference type="Gene3D" id="2.60.40.1910">
    <property type="match status" value="1"/>
</dbReference>
<dbReference type="Gene3D" id="1.10.390.10">
    <property type="entry name" value="Neutral Protease Domain 2"/>
    <property type="match status" value="1"/>
</dbReference>
<dbReference type="Gene3D" id="2.60.40.1730">
    <property type="entry name" value="tricorn interacting facor f3 domain"/>
    <property type="match status" value="1"/>
</dbReference>
<dbReference type="InterPro" id="IPR045357">
    <property type="entry name" value="Aminopeptidase_N-like_N"/>
</dbReference>
<dbReference type="InterPro" id="IPR042097">
    <property type="entry name" value="Aminopeptidase_N-like_N_sf"/>
</dbReference>
<dbReference type="InterPro" id="IPR024571">
    <property type="entry name" value="ERAP1-like_C_dom"/>
</dbReference>
<dbReference type="InterPro" id="IPR034016">
    <property type="entry name" value="M1_APN-typ"/>
</dbReference>
<dbReference type="InterPro" id="IPR001930">
    <property type="entry name" value="Peptidase_M1"/>
</dbReference>
<dbReference type="InterPro" id="IPR050344">
    <property type="entry name" value="Peptidase_M1_aminopeptidases"/>
</dbReference>
<dbReference type="InterPro" id="IPR014782">
    <property type="entry name" value="Peptidase_M1_dom"/>
</dbReference>
<dbReference type="InterPro" id="IPR027268">
    <property type="entry name" value="Peptidase_M4/M1_CTD_sf"/>
</dbReference>
<dbReference type="PANTHER" id="PTHR11533:SF172">
    <property type="entry name" value="AMINOPEPTIDASE N"/>
    <property type="match status" value="1"/>
</dbReference>
<dbReference type="PANTHER" id="PTHR11533">
    <property type="entry name" value="PROTEASE M1 ZINC METALLOPROTEASE"/>
    <property type="match status" value="1"/>
</dbReference>
<dbReference type="Pfam" id="PF11838">
    <property type="entry name" value="ERAP1_C"/>
    <property type="match status" value="1"/>
</dbReference>
<dbReference type="Pfam" id="PF01433">
    <property type="entry name" value="Peptidase_M1"/>
    <property type="match status" value="1"/>
</dbReference>
<dbReference type="Pfam" id="PF17900">
    <property type="entry name" value="Peptidase_M1_N"/>
    <property type="match status" value="1"/>
</dbReference>
<dbReference type="PRINTS" id="PR00756">
    <property type="entry name" value="ALADIPTASE"/>
</dbReference>
<dbReference type="SUPFAM" id="SSF63737">
    <property type="entry name" value="Leukotriene A4 hydrolase N-terminal domain"/>
    <property type="match status" value="1"/>
</dbReference>
<dbReference type="SUPFAM" id="SSF55486">
    <property type="entry name" value="Metalloproteases ('zincins'), catalytic domain"/>
    <property type="match status" value="1"/>
</dbReference>
<dbReference type="PROSITE" id="PS00142">
    <property type="entry name" value="ZINC_PROTEASE"/>
    <property type="match status" value="1"/>
</dbReference>
<feature type="chain" id="PRO_0000095078" description="Aminopeptidase N">
    <location>
        <begin position="1"/>
        <end position="965"/>
    </location>
</feature>
<feature type="topological domain" description="Cytoplasmic" evidence="1">
    <location>
        <begin position="1"/>
        <end position="8"/>
    </location>
</feature>
<feature type="transmembrane region" description="Helical; Signal-anchor for type II membrane protein" evidence="4">
    <location>
        <begin position="9"/>
        <end position="32"/>
    </location>
</feature>
<feature type="topological domain" description="Extracellular" evidence="1">
    <location>
        <begin position="33"/>
        <end position="965"/>
    </location>
</feature>
<feature type="region of interest" description="Cytosolic Ser/Thr-rich junction">
    <location>
        <begin position="33"/>
        <end position="65"/>
    </location>
</feature>
<feature type="region of interest" description="Disordered" evidence="6">
    <location>
        <begin position="40"/>
        <end position="65"/>
    </location>
</feature>
<feature type="region of interest" description="Metalloprotease">
    <location>
        <begin position="66"/>
        <end position="965"/>
    </location>
</feature>
<feature type="compositionally biased region" description="Low complexity" evidence="6">
    <location>
        <begin position="44"/>
        <end position="61"/>
    </location>
</feature>
<feature type="active site" description="Proton acceptor" evidence="5">
    <location>
        <position position="386"/>
    </location>
</feature>
<feature type="binding site" evidence="1">
    <location>
        <begin position="349"/>
        <end position="353"/>
    </location>
    <ligand>
        <name>substrate</name>
    </ligand>
</feature>
<feature type="binding site" evidence="5">
    <location>
        <position position="385"/>
    </location>
    <ligand>
        <name>Zn(2+)</name>
        <dbReference type="ChEBI" id="CHEBI:29105"/>
        <note>catalytic</note>
    </ligand>
</feature>
<feature type="binding site" evidence="5">
    <location>
        <position position="389"/>
    </location>
    <ligand>
        <name>Zn(2+)</name>
        <dbReference type="ChEBI" id="CHEBI:29105"/>
        <note>catalytic</note>
    </ligand>
</feature>
<feature type="binding site" evidence="5">
    <location>
        <position position="408"/>
    </location>
    <ligand>
        <name>Zn(2+)</name>
        <dbReference type="ChEBI" id="CHEBI:29105"/>
        <note>catalytic</note>
    </ligand>
</feature>
<feature type="site" description="Transition state stabilizer" evidence="1">
    <location>
        <position position="474"/>
    </location>
</feature>
<feature type="modified residue" description="Sulfotyrosine" evidence="4">
    <location>
        <position position="173"/>
    </location>
</feature>
<feature type="modified residue" description="Sulfotyrosine" evidence="4">
    <location>
        <position position="416"/>
    </location>
</feature>
<feature type="glycosylation site" description="N-linked (GlcNAc...) asparagine" evidence="4">
    <location>
        <position position="125"/>
    </location>
</feature>
<feature type="glycosylation site" description="N-linked (GlcNAc...) asparagine" evidence="4">
    <location>
        <position position="231"/>
    </location>
</feature>
<feature type="glycosylation site" description="N-linked (GlcNAc...) asparagine" evidence="4">
    <location>
        <position position="260"/>
    </location>
</feature>
<feature type="glycosylation site" description="N-linked (GlcNAc...) asparagine" evidence="4">
    <location>
        <position position="316"/>
    </location>
</feature>
<feature type="glycosylation site" description="N-linked (GlcNAc...) asparagine" evidence="4">
    <location>
        <position position="508"/>
    </location>
</feature>
<feature type="glycosylation site" description="N-linked (GlcNAc...) asparagine" evidence="4">
    <location>
        <position position="569"/>
    </location>
</feature>
<feature type="glycosylation site" description="N-linked (GlcNAc...) asparagine" evidence="4">
    <location>
        <position position="624"/>
    </location>
</feature>
<feature type="glycosylation site" description="N-linked (GlcNAc...) asparagine" evidence="4">
    <location>
        <position position="680"/>
    </location>
</feature>
<feature type="glycosylation site" description="N-linked (GlcNAc...) asparagine" evidence="4">
    <location>
        <position position="734"/>
    </location>
</feature>
<feature type="glycosylation site" description="N-linked (GlcNAc...) asparagine" evidence="4">
    <location>
        <position position="738"/>
    </location>
</feature>
<feature type="disulfide bond" evidence="1">
    <location>
        <begin position="760"/>
        <end position="767"/>
    </location>
</feature>
<feature type="disulfide bond" evidence="1">
    <location>
        <begin position="797"/>
        <end position="833"/>
    </location>
</feature>
<evidence type="ECO:0000250" key="1">
    <source>
        <dbReference type="UniProtKB" id="P15144"/>
    </source>
</evidence>
<evidence type="ECO:0000250" key="2">
    <source>
        <dbReference type="UniProtKB" id="P15145"/>
    </source>
</evidence>
<evidence type="ECO:0000250" key="3">
    <source>
        <dbReference type="UniProtKB" id="P97449"/>
    </source>
</evidence>
<evidence type="ECO:0000255" key="4"/>
<evidence type="ECO:0000255" key="5">
    <source>
        <dbReference type="PROSITE-ProRule" id="PRU10095"/>
    </source>
</evidence>
<evidence type="ECO:0000256" key="6">
    <source>
        <dbReference type="SAM" id="MobiDB-lite"/>
    </source>
</evidence>
<evidence type="ECO:0000305" key="7"/>
<accession>P79098</accession>
<accession>Q3MHR1</accession>
<keyword id="KW-0031">Aminopeptidase</keyword>
<keyword id="KW-0037">Angiogenesis</keyword>
<keyword id="KW-1003">Cell membrane</keyword>
<keyword id="KW-0217">Developmental protein</keyword>
<keyword id="KW-0221">Differentiation</keyword>
<keyword id="KW-1015">Disulfide bond</keyword>
<keyword id="KW-0325">Glycoprotein</keyword>
<keyword id="KW-1183">Host cell receptor for virus entry</keyword>
<keyword id="KW-0378">Hydrolase</keyword>
<keyword id="KW-0472">Membrane</keyword>
<keyword id="KW-0479">Metal-binding</keyword>
<keyword id="KW-0482">Metalloprotease</keyword>
<keyword id="KW-0645">Protease</keyword>
<keyword id="KW-0675">Receptor</keyword>
<keyword id="KW-1185">Reference proteome</keyword>
<keyword id="KW-0735">Signal-anchor</keyword>
<keyword id="KW-0765">Sulfation</keyword>
<keyword id="KW-0812">Transmembrane</keyword>
<keyword id="KW-1133">Transmembrane helix</keyword>
<keyword id="KW-0862">Zinc</keyword>
<comment type="function">
    <text evidence="1 3">Broad specificity aminopeptidase which plays a role in the final digestion of peptides generated from hydrolysis of proteins by gastric and pancreatic proteases. Also involved in the processing of various peptides including peptide hormones, such as angiotensin III and IV, neuropeptides, and chemokines. May also be involved the cleavage of peptides bound to major histocompatibility complex class II molecules of antigen presenting cells. May have a role in angiogenesis and promote cholesterol crystallization. May have a role in amino acid transport by acting as binding partner of amino acid transporter SLC6A19 and regulating its activity (By similarity).</text>
</comment>
<comment type="catalytic activity">
    <reaction evidence="1">
        <text>Release of an N-terminal amino acid, Xaa-|-Yaa- from a peptide, amide or arylamide. Xaa is preferably Ala, but may be most amino acids including Pro (slow action). When a terminal hydrophobic residue is followed by a prolyl residue, the two may be released as an intact Xaa-Pro dipeptide.</text>
        <dbReference type="EC" id="3.4.11.2"/>
    </reaction>
</comment>
<comment type="cofactor">
    <cofactor evidence="1">
        <name>Zn(2+)</name>
        <dbReference type="ChEBI" id="CHEBI:29105"/>
    </cofactor>
    <text evidence="1">Binds 1 zinc ion per subunit.</text>
</comment>
<comment type="subunit">
    <text evidence="1 3">Homodimer. Interacts with SLC6A19 (By similarity).</text>
</comment>
<comment type="subcellular location">
    <subcellularLocation>
        <location evidence="1">Cell membrane</location>
        <topology evidence="1">Single-pass type II membrane protein</topology>
    </subcellularLocation>
    <text evidence="1">Also found as a soluble form.</text>
</comment>
<comment type="PTM">
    <text evidence="2">Sulfated.</text>
</comment>
<comment type="PTM">
    <text evidence="1">N- and O-glycosylated.</text>
</comment>
<comment type="PTM">
    <text evidence="1">May undergo proteolysis and give rise to a soluble form.</text>
</comment>
<comment type="similarity">
    <text evidence="7">Belongs to the peptidase M1 family.</text>
</comment>